<organism>
    <name type="scientific">Escherichia coli O17:K52:H18 (strain UMN026 / ExPEC)</name>
    <dbReference type="NCBI Taxonomy" id="585056"/>
    <lineage>
        <taxon>Bacteria</taxon>
        <taxon>Pseudomonadati</taxon>
        <taxon>Pseudomonadota</taxon>
        <taxon>Gammaproteobacteria</taxon>
        <taxon>Enterobacterales</taxon>
        <taxon>Enterobacteriaceae</taxon>
        <taxon>Escherichia</taxon>
    </lineage>
</organism>
<gene>
    <name evidence="1" type="primary">rutB</name>
    <name type="ordered locus">ECUMN_1194</name>
</gene>
<accession>B7N3G7</accession>
<sequence length="230" mass="25241">MTILTARPEAITFDPQQSALIVVDMQNAYATPGGYLDLAGFDVSTTRPVIANIQTAVTAARAAGMLIIWFQNGWDEQYVEAGGPGSPNFHKSNALKTMRKQPQLQGKLLAKGSWDYQLVDELVPQPGDIVLPKPRYSGFFNTPLDSILRSRGIRHLVFTGIATNVCVESTLRDGFFLEYFGVVLEDATHQAGPEFAQKAALFNIETFFGWVSDVETFCDALSPTSFARIA</sequence>
<evidence type="ECO:0000255" key="1">
    <source>
        <dbReference type="HAMAP-Rule" id="MF_00830"/>
    </source>
</evidence>
<name>RUTB_ECOLU</name>
<keyword id="KW-0378">Hydrolase</keyword>
<comment type="function">
    <text evidence="1">Hydrolyzes ureidoacrylate to form aminoacrylate and carbamate. The carbamate hydrolyzes spontaneously, thereby releasing one of the nitrogen atoms of the pyrimidine ring as ammonia and one of its carbon atoms as CO2.</text>
</comment>
<comment type="catalytic activity">
    <reaction evidence="1">
        <text>(Z)-3-ureidoacrylate + H2O + H(+) = (Z)-3-aminoacrylate + NH4(+) + CO2</text>
        <dbReference type="Rhea" id="RHEA:42624"/>
        <dbReference type="ChEBI" id="CHEBI:15377"/>
        <dbReference type="ChEBI" id="CHEBI:15378"/>
        <dbReference type="ChEBI" id="CHEBI:16526"/>
        <dbReference type="ChEBI" id="CHEBI:28938"/>
        <dbReference type="ChEBI" id="CHEBI:59891"/>
        <dbReference type="ChEBI" id="CHEBI:59894"/>
        <dbReference type="EC" id="3.5.1.110"/>
    </reaction>
</comment>
<comment type="catalytic activity">
    <reaction evidence="1">
        <text>(Z)-3-ureidoacrylate + H2O = (Z)-3-aminoacrylate + carbamate + H(+)</text>
        <dbReference type="Rhea" id="RHEA:31603"/>
        <dbReference type="ChEBI" id="CHEBI:13941"/>
        <dbReference type="ChEBI" id="CHEBI:15377"/>
        <dbReference type="ChEBI" id="CHEBI:15378"/>
        <dbReference type="ChEBI" id="CHEBI:59891"/>
        <dbReference type="ChEBI" id="CHEBI:59894"/>
    </reaction>
</comment>
<comment type="catalytic activity">
    <reaction evidence="1">
        <text>(Z)-2-methylureidoacrylate + H2O + H(+) = (Z)-2-methylaminoacrylate + NH4(+) + CO2</text>
        <dbReference type="Rhea" id="RHEA:42620"/>
        <dbReference type="ChEBI" id="CHEBI:15377"/>
        <dbReference type="ChEBI" id="CHEBI:15378"/>
        <dbReference type="ChEBI" id="CHEBI:16526"/>
        <dbReference type="ChEBI" id="CHEBI:28938"/>
        <dbReference type="ChEBI" id="CHEBI:143783"/>
        <dbReference type="ChEBI" id="CHEBI:145735"/>
        <dbReference type="EC" id="3.5.1.110"/>
    </reaction>
</comment>
<comment type="induction">
    <text evidence="1">Up-regulated by the nitrogen regulatory protein C (NtrC also called GlnG) and repressed by RutR.</text>
</comment>
<comment type="similarity">
    <text evidence="1">Belongs to the isochorismatase family. RutB subfamily.</text>
</comment>
<feature type="chain" id="PRO_0000402674" description="Ureidoacrylate amidohydrolase RutB">
    <location>
        <begin position="1"/>
        <end position="230"/>
    </location>
</feature>
<feature type="active site" description="Proton acceptor" evidence="1">
    <location>
        <position position="24"/>
    </location>
</feature>
<feature type="active site" evidence="1">
    <location>
        <position position="133"/>
    </location>
</feature>
<feature type="active site" description="Nucleophile" evidence="1">
    <location>
        <position position="166"/>
    </location>
</feature>
<protein>
    <recommendedName>
        <fullName evidence="1">Ureidoacrylate amidohydrolase RutB</fullName>
        <ecNumber evidence="1">3.5.1.110</ecNumber>
    </recommendedName>
</protein>
<dbReference type="EC" id="3.5.1.110" evidence="1"/>
<dbReference type="EMBL" id="CU928163">
    <property type="protein sequence ID" value="CAR12403.1"/>
    <property type="molecule type" value="Genomic_DNA"/>
</dbReference>
<dbReference type="RefSeq" id="WP_001446784.1">
    <property type="nucleotide sequence ID" value="NC_011751.1"/>
</dbReference>
<dbReference type="RefSeq" id="YP_002411947.1">
    <property type="nucleotide sequence ID" value="NC_011751.1"/>
</dbReference>
<dbReference type="SMR" id="B7N3G7"/>
<dbReference type="STRING" id="585056.ECUMN_1194"/>
<dbReference type="KEGG" id="eum:ECUMN_1194"/>
<dbReference type="PATRIC" id="fig|585056.7.peg.1391"/>
<dbReference type="HOGENOM" id="CLU_068979_8_0_6"/>
<dbReference type="Proteomes" id="UP000007097">
    <property type="component" value="Chromosome"/>
</dbReference>
<dbReference type="GO" id="GO:0016811">
    <property type="term" value="F:hydrolase activity, acting on carbon-nitrogen (but not peptide) bonds, in linear amides"/>
    <property type="evidence" value="ECO:0007669"/>
    <property type="project" value="UniProtKB-UniRule"/>
</dbReference>
<dbReference type="GO" id="GO:0019740">
    <property type="term" value="P:nitrogen utilization"/>
    <property type="evidence" value="ECO:0007669"/>
    <property type="project" value="UniProtKB-UniRule"/>
</dbReference>
<dbReference type="GO" id="GO:0006212">
    <property type="term" value="P:uracil catabolic process"/>
    <property type="evidence" value="ECO:0007669"/>
    <property type="project" value="UniProtKB-UniRule"/>
</dbReference>
<dbReference type="CDD" id="cd00431">
    <property type="entry name" value="cysteine_hydrolases"/>
    <property type="match status" value="1"/>
</dbReference>
<dbReference type="FunFam" id="3.40.50.850:FF:000004">
    <property type="entry name" value="Peroxyureidoacrylate/ureidoacrylate amidohydrolase RutB"/>
    <property type="match status" value="1"/>
</dbReference>
<dbReference type="Gene3D" id="3.40.50.850">
    <property type="entry name" value="Isochorismatase-like"/>
    <property type="match status" value="1"/>
</dbReference>
<dbReference type="HAMAP" id="MF_00830">
    <property type="entry name" value="RutB"/>
    <property type="match status" value="1"/>
</dbReference>
<dbReference type="InterPro" id="IPR000868">
    <property type="entry name" value="Isochorismatase-like_dom"/>
</dbReference>
<dbReference type="InterPro" id="IPR050272">
    <property type="entry name" value="Isochorismatase-like_hydrls"/>
</dbReference>
<dbReference type="InterPro" id="IPR036380">
    <property type="entry name" value="Isochorismatase-like_sf"/>
</dbReference>
<dbReference type="InterPro" id="IPR019916">
    <property type="entry name" value="RutB"/>
</dbReference>
<dbReference type="NCBIfam" id="TIGR03614">
    <property type="entry name" value="RutB"/>
    <property type="match status" value="1"/>
</dbReference>
<dbReference type="PANTHER" id="PTHR43540:SF6">
    <property type="entry name" value="ISOCHORISMATASE-LIKE DOMAIN-CONTAINING PROTEIN"/>
    <property type="match status" value="1"/>
</dbReference>
<dbReference type="PANTHER" id="PTHR43540">
    <property type="entry name" value="PEROXYUREIDOACRYLATE/UREIDOACRYLATE AMIDOHYDROLASE-RELATED"/>
    <property type="match status" value="1"/>
</dbReference>
<dbReference type="Pfam" id="PF00857">
    <property type="entry name" value="Isochorismatase"/>
    <property type="match status" value="1"/>
</dbReference>
<dbReference type="SUPFAM" id="SSF52499">
    <property type="entry name" value="Isochorismatase-like hydrolases"/>
    <property type="match status" value="1"/>
</dbReference>
<proteinExistence type="inferred from homology"/>
<reference key="1">
    <citation type="journal article" date="2009" name="PLoS Genet.">
        <title>Organised genome dynamics in the Escherichia coli species results in highly diverse adaptive paths.</title>
        <authorList>
            <person name="Touchon M."/>
            <person name="Hoede C."/>
            <person name="Tenaillon O."/>
            <person name="Barbe V."/>
            <person name="Baeriswyl S."/>
            <person name="Bidet P."/>
            <person name="Bingen E."/>
            <person name="Bonacorsi S."/>
            <person name="Bouchier C."/>
            <person name="Bouvet O."/>
            <person name="Calteau A."/>
            <person name="Chiapello H."/>
            <person name="Clermont O."/>
            <person name="Cruveiller S."/>
            <person name="Danchin A."/>
            <person name="Diard M."/>
            <person name="Dossat C."/>
            <person name="Karoui M.E."/>
            <person name="Frapy E."/>
            <person name="Garry L."/>
            <person name="Ghigo J.M."/>
            <person name="Gilles A.M."/>
            <person name="Johnson J."/>
            <person name="Le Bouguenec C."/>
            <person name="Lescat M."/>
            <person name="Mangenot S."/>
            <person name="Martinez-Jehanne V."/>
            <person name="Matic I."/>
            <person name="Nassif X."/>
            <person name="Oztas S."/>
            <person name="Petit M.A."/>
            <person name="Pichon C."/>
            <person name="Rouy Z."/>
            <person name="Ruf C.S."/>
            <person name="Schneider D."/>
            <person name="Tourret J."/>
            <person name="Vacherie B."/>
            <person name="Vallenet D."/>
            <person name="Medigue C."/>
            <person name="Rocha E.P.C."/>
            <person name="Denamur E."/>
        </authorList>
    </citation>
    <scope>NUCLEOTIDE SEQUENCE [LARGE SCALE GENOMIC DNA]</scope>
    <source>
        <strain>UMN026 / ExPEC</strain>
    </source>
</reference>